<name>ILVH_MYCBO</name>
<sequence>MSPKTHTLSVLVEDKPGVLARVAALFSRRGFNIESLAVGATECKDRSRMTIVVSAEDTPLEQITKQLNKLINVIKIVEQDDEHSVSRELALIKVQADAGSRSQVIEAVNLFRANVIDVSPESLTVEATGNRGKLEALLRVLEPFGIREIAQSGMVSLSRGPRGIGTAK</sequence>
<reference key="1">
    <citation type="journal article" date="2003" name="Proc. Natl. Acad. Sci. U.S.A.">
        <title>The complete genome sequence of Mycobacterium bovis.</title>
        <authorList>
            <person name="Garnier T."/>
            <person name="Eiglmeier K."/>
            <person name="Camus J.-C."/>
            <person name="Medina N."/>
            <person name="Mansoor H."/>
            <person name="Pryor M."/>
            <person name="Duthoy S."/>
            <person name="Grondin S."/>
            <person name="Lacroix C."/>
            <person name="Monsempe C."/>
            <person name="Simon S."/>
            <person name="Harris B."/>
            <person name="Atkin R."/>
            <person name="Doggett J."/>
            <person name="Mayes R."/>
            <person name="Keating L."/>
            <person name="Wheeler P.R."/>
            <person name="Parkhill J."/>
            <person name="Barrell B.G."/>
            <person name="Cole S.T."/>
            <person name="Gordon S.V."/>
            <person name="Hewinson R.G."/>
        </authorList>
    </citation>
    <scope>NUCLEOTIDE SEQUENCE [LARGE SCALE GENOMIC DNA]</scope>
    <source>
        <strain>ATCC BAA-935 / AF2122/97</strain>
    </source>
</reference>
<reference key="2">
    <citation type="journal article" date="2017" name="Genome Announc.">
        <title>Updated reference genome sequence and annotation of Mycobacterium bovis AF2122/97.</title>
        <authorList>
            <person name="Malone K.M."/>
            <person name="Farrell D."/>
            <person name="Stuber T.P."/>
            <person name="Schubert O.T."/>
            <person name="Aebersold R."/>
            <person name="Robbe-Austerman S."/>
            <person name="Gordon S.V."/>
        </authorList>
    </citation>
    <scope>NUCLEOTIDE SEQUENCE [LARGE SCALE GENOMIC DNA]</scope>
    <scope>GENOME REANNOTATION</scope>
    <source>
        <strain>ATCC BAA-935 / AF2122/97</strain>
    </source>
</reference>
<accession>P65162</accession>
<accession>A0A1R3Y2U3</accession>
<accession>O53249</accession>
<accession>X2BMT4</accession>
<protein>
    <recommendedName>
        <fullName>Acetolactate synthase small subunit</fullName>
        <ecNumber>2.2.1.6</ecNumber>
    </recommendedName>
    <alternativeName>
        <fullName>Acetohydroxy-acid synthase small subunit</fullName>
        <shortName>AHAS</shortName>
        <shortName>ALS</shortName>
    </alternativeName>
</protein>
<evidence type="ECO:0000250" key="1"/>
<evidence type="ECO:0000255" key="2">
    <source>
        <dbReference type="PROSITE-ProRule" id="PRU01007"/>
    </source>
</evidence>
<evidence type="ECO:0000305" key="3"/>
<feature type="chain" id="PRO_0000151417" description="Acetolactate synthase small subunit">
    <location>
        <begin position="1"/>
        <end position="168"/>
    </location>
</feature>
<feature type="domain" description="ACT" evidence="2">
    <location>
        <begin position="7"/>
        <end position="82"/>
    </location>
</feature>
<keyword id="KW-0028">Amino-acid biosynthesis</keyword>
<keyword id="KW-0100">Branched-chain amino acid biosynthesis</keyword>
<keyword id="KW-1185">Reference proteome</keyword>
<keyword id="KW-0808">Transferase</keyword>
<proteinExistence type="inferred from homology"/>
<organism>
    <name type="scientific">Mycobacterium bovis (strain ATCC BAA-935 / AF2122/97)</name>
    <dbReference type="NCBI Taxonomy" id="233413"/>
    <lineage>
        <taxon>Bacteria</taxon>
        <taxon>Bacillati</taxon>
        <taxon>Actinomycetota</taxon>
        <taxon>Actinomycetes</taxon>
        <taxon>Mycobacteriales</taxon>
        <taxon>Mycobacteriaceae</taxon>
        <taxon>Mycobacterium</taxon>
        <taxon>Mycobacterium tuberculosis complex</taxon>
    </lineage>
</organism>
<comment type="catalytic activity">
    <reaction>
        <text>2 pyruvate + H(+) = (2S)-2-acetolactate + CO2</text>
        <dbReference type="Rhea" id="RHEA:25249"/>
        <dbReference type="ChEBI" id="CHEBI:15361"/>
        <dbReference type="ChEBI" id="CHEBI:15378"/>
        <dbReference type="ChEBI" id="CHEBI:16526"/>
        <dbReference type="ChEBI" id="CHEBI:58476"/>
        <dbReference type="EC" id="2.2.1.6"/>
    </reaction>
</comment>
<comment type="pathway">
    <text>Amino-acid biosynthesis; L-isoleucine biosynthesis; L-isoleucine from 2-oxobutanoate: step 1/4.</text>
</comment>
<comment type="pathway">
    <text>Amino-acid biosynthesis; L-valine biosynthesis; L-valine from pyruvate: step 1/4.</text>
</comment>
<comment type="subunit">
    <text evidence="1">Dimer of large and small chains.</text>
</comment>
<comment type="similarity">
    <text evidence="3">Belongs to the acetolactate synthase small subunit family.</text>
</comment>
<gene>
    <name type="primary">ilvH</name>
    <name type="synonym">ilvN</name>
    <name type="ordered locus">BQ2027_MB3027C</name>
</gene>
<dbReference type="EC" id="2.2.1.6"/>
<dbReference type="EMBL" id="LT708304">
    <property type="protein sequence ID" value="SIU01651.1"/>
    <property type="molecule type" value="Genomic_DNA"/>
</dbReference>
<dbReference type="RefSeq" id="NP_856672.1">
    <property type="nucleotide sequence ID" value="NC_002945.3"/>
</dbReference>
<dbReference type="RefSeq" id="WP_003415167.1">
    <property type="nucleotide sequence ID" value="NC_002945.4"/>
</dbReference>
<dbReference type="SMR" id="P65162"/>
<dbReference type="GeneID" id="45426992"/>
<dbReference type="KEGG" id="mbo:BQ2027_MB3027C"/>
<dbReference type="PATRIC" id="fig|233413.5.peg.3327"/>
<dbReference type="UniPathway" id="UPA00047">
    <property type="reaction ID" value="UER00055"/>
</dbReference>
<dbReference type="UniPathway" id="UPA00049">
    <property type="reaction ID" value="UER00059"/>
</dbReference>
<dbReference type="Proteomes" id="UP000001419">
    <property type="component" value="Chromosome"/>
</dbReference>
<dbReference type="GO" id="GO:0005829">
    <property type="term" value="C:cytosol"/>
    <property type="evidence" value="ECO:0007669"/>
    <property type="project" value="TreeGrafter"/>
</dbReference>
<dbReference type="GO" id="GO:0003984">
    <property type="term" value="F:acetolactate synthase activity"/>
    <property type="evidence" value="ECO:0007669"/>
    <property type="project" value="UniProtKB-EC"/>
</dbReference>
<dbReference type="GO" id="GO:1990610">
    <property type="term" value="F:acetolactate synthase regulator activity"/>
    <property type="evidence" value="ECO:0007669"/>
    <property type="project" value="InterPro"/>
</dbReference>
<dbReference type="GO" id="GO:0009097">
    <property type="term" value="P:isoleucine biosynthetic process"/>
    <property type="evidence" value="ECO:0007669"/>
    <property type="project" value="UniProtKB-UniPathway"/>
</dbReference>
<dbReference type="GO" id="GO:0009099">
    <property type="term" value="P:L-valine biosynthetic process"/>
    <property type="evidence" value="ECO:0007669"/>
    <property type="project" value="UniProtKB-UniPathway"/>
</dbReference>
<dbReference type="CDD" id="cd04878">
    <property type="entry name" value="ACT_AHAS"/>
    <property type="match status" value="1"/>
</dbReference>
<dbReference type="FunFam" id="3.30.70.1150:FF:000001">
    <property type="entry name" value="Acetolactate synthase small subunit"/>
    <property type="match status" value="1"/>
</dbReference>
<dbReference type="FunFam" id="3.30.70.260:FF:000001">
    <property type="entry name" value="Acetolactate synthase, small subunit"/>
    <property type="match status" value="1"/>
</dbReference>
<dbReference type="Gene3D" id="3.30.70.260">
    <property type="match status" value="1"/>
</dbReference>
<dbReference type="Gene3D" id="3.30.70.1150">
    <property type="entry name" value="ACT-like. Chain A, domain 2"/>
    <property type="match status" value="1"/>
</dbReference>
<dbReference type="InterPro" id="IPR004789">
    <property type="entry name" value="Acetalactate_synth_ssu"/>
</dbReference>
<dbReference type="InterPro" id="IPR027271">
    <property type="entry name" value="Acetolactate_synth/TF_NikR_C"/>
</dbReference>
<dbReference type="InterPro" id="IPR019455">
    <property type="entry name" value="Acetolactate_synth_ssu_C"/>
</dbReference>
<dbReference type="InterPro" id="IPR045865">
    <property type="entry name" value="ACT-like_dom_sf"/>
</dbReference>
<dbReference type="InterPro" id="IPR002912">
    <property type="entry name" value="ACT_dom"/>
</dbReference>
<dbReference type="InterPro" id="IPR039557">
    <property type="entry name" value="AHAS_ACT"/>
</dbReference>
<dbReference type="InterPro" id="IPR054480">
    <property type="entry name" value="AHAS_small-like_ACT"/>
</dbReference>
<dbReference type="NCBIfam" id="TIGR00119">
    <property type="entry name" value="acolac_sm"/>
    <property type="match status" value="1"/>
</dbReference>
<dbReference type="NCBIfam" id="NF008864">
    <property type="entry name" value="PRK11895.1"/>
    <property type="match status" value="1"/>
</dbReference>
<dbReference type="PANTHER" id="PTHR30239">
    <property type="entry name" value="ACETOLACTATE SYNTHASE SMALL SUBUNIT"/>
    <property type="match status" value="1"/>
</dbReference>
<dbReference type="PANTHER" id="PTHR30239:SF0">
    <property type="entry name" value="ACETOLACTATE SYNTHASE SMALL SUBUNIT 1, CHLOROPLASTIC"/>
    <property type="match status" value="1"/>
</dbReference>
<dbReference type="Pfam" id="PF22629">
    <property type="entry name" value="ACT_AHAS_ss"/>
    <property type="match status" value="1"/>
</dbReference>
<dbReference type="Pfam" id="PF10369">
    <property type="entry name" value="ALS_ss_C"/>
    <property type="match status" value="1"/>
</dbReference>
<dbReference type="SUPFAM" id="SSF55021">
    <property type="entry name" value="ACT-like"/>
    <property type="match status" value="2"/>
</dbReference>
<dbReference type="PROSITE" id="PS51671">
    <property type="entry name" value="ACT"/>
    <property type="match status" value="1"/>
</dbReference>